<evidence type="ECO:0000250" key="1">
    <source>
        <dbReference type="UniProtKB" id="O94205"/>
    </source>
</evidence>
<evidence type="ECO:0000250" key="2">
    <source>
        <dbReference type="UniProtKB" id="Q50EL0"/>
    </source>
</evidence>
<evidence type="ECO:0000255" key="3"/>
<evidence type="ECO:0000255" key="4">
    <source>
        <dbReference type="PROSITE-ProRule" id="PRU00258"/>
    </source>
</evidence>
<evidence type="ECO:0000269" key="5">
    <source>
    </source>
</evidence>
<evidence type="ECO:0000269" key="6">
    <source>
    </source>
</evidence>
<evidence type="ECO:0000303" key="7">
    <source>
    </source>
</evidence>
<evidence type="ECO:0000305" key="8"/>
<evidence type="ECO:0000305" key="9">
    <source>
    </source>
</evidence>
<sequence>MGSTTVEPVGSTYARPKPLGNLDHRIEQLLGSESVLNESPGHSPNAYGIPYTARNLTLEDVDHCKSLTNKDLSLEFWKSHLQTAKPCILTRLKPGTGSSILSSRQSVKVDLGGVNTTCRNLFDSTGISLMTVFKVAWGMVLSTYTGSDHVCFGYGAARPSMSVDGEQTTIKPLIKMLPCDMLFKGGTTLLGTVHKAESDFICTIPYQSVSIAEIHHGIGTESGALFNTSIIFWPQEDFSDNPITEVLSQKVTETESLTECDIIMHVDSKQQCYLSYWDYFLSDEQANHLAGALNVAMKSIFESPHRPVGQVEMFSYLDQQKLLQWNGQAPIASESCLGDLIGQNCHSRPDSLAVDSWDGFFTYQELDRLSSTLANKLRCAGVGPDVFVTACFDRCKWMPVAMLGIIKAGGAICALDPSYPLGRLTGMCQLLKSTVVLTTANNAQQAEQLALTTIVLGNDLWTGDSYDEQERQAPLSNVCPSNALYAVFTSGSTGKPKGVVVEHRSFSSCALASLKPLDIRPHDRVLHISSYAFDISIFETLATLTAGASVAIPSEKARREDLPGAMRELQATWAFLTPTVARMYQPKDFPSLRTLCLGGEAIHTSDIGLWASKNLVTGYNPAESCPLGISGPADKSAASFLGWSFSSQASWIVDPRDYQKLAPIGAVGELMIEGPAVARGYIHDLTCSHPDSPFVLPPPQWLSRFRASTSQDTRLYRTGDLVQYGSNGSVHFIGRKDLQVKVHGQRVELSEIEFQLHKTLLPLDCKVVVDAVTFTGHTSVIAFITAAEHSDLENEDDAVRSPDVKVITQDFEIRAADAATKLQSILPRHMVPTIYLPVGHIPMSRSGKIDRQKLRSLALSLPRETLYHIGRQPGPGEIVVTDVERRLQLLFAQVLDLSPEKIKADSDFFRLGGDSIYAMKLLALAPQQGPRDLTYEEIFRHPKLRDLAAASSSFSNISLAIPEDLGPAPFSLARDADSLTKIASEQCGVAVGDIEDIYPCTSLQESLIASTAHDQDAYVGVQSFTLNDDIDTTRLKMAWKMTSEGHPILRTRIIQTDSGAPYQAVIRGPLSWSEESSSDDLPPQFQPSIGLGTPLVQLCLTNSRLLVAMHHALYDGWSLPLLLAEVDQAYRQLSVRQLPPFNRYVKHVTETVDSAASFWKAELQDADPVDFPPLPHLNYKPEPRALLTKSITLTAHTNSQHNVTLATELQLAWALTSHTYTNSQDVVFGIISSGRGAPVAGIERMLGPTFASTPLRVPLDPAQDVREALEELQYRLAEQTKYVQIGLQRIRQQGPNAAAACSFQTMLVVEPNQPVKTQSAWFSRHEFLSELTRFSSHSLTLRCKLLAGSVEVTAIYDQLVVPDAQMQRILSQFQHILTQIQGIGSRDTTIGDIDRLSSGDWNELQAWNSTLPPGLELSVHQMVQAKAQMQPEALAIHSWDGDLTYKELEDYAKGLANRLHALGVRPNTFVAIYLQKSLWVVVAQLAVLIAGAAFTTLETSQPINRLRDVCRTVQPTVVLTSDKLRLSGADLEVPAPLLVINQQLLLEEPGSHSRPLENHTIMASDAMYSIATSGTTGKPKVVVIEHQAFLANSKHLIDRWGFTADSRVLQFAGYSFDAMIVEHFITLLAGGCICIPSSFDRDNRLATCIVEMRVNWAMLTSSVIPLFTPAAVPTLQTLVQAGEPMHQGITDCWASHVQLFNAYGPTECSVISTTSNIINPDARNPRNIGFTTGGVCWIVDPENPESPPVPIGAEGELIIEGAILARGYLGDRVRTAAAFTLRPGWLDDFRGSSGDNRIYRTGDIVRYDPDGSISYVRRKDSQVKLRGQRVELLDVEHHLQNCFPGALQVVADIVTVPNTQSSALVALVLATPTSSSSVAIESCSNDDQATTAHGLLLLANNPQFLIDASAAELALQDRVPSYMVPSLFIPTSRFPRDVSGKVNRGEITRSLAALSRQEWDGYVSTNRVAPTSGLERELQKIWARILNIPPDTIGVHDSFFRLGGDSITCMQVAAQCSRTGILITVKDIFKRRTIEKLAAAAVVVQCPESSTTERVNTAEAKFSFYGPGQLEEYMIQIQPQLGEGQVVEDIYPCSPIQRGILMSHARNSGNYEEVIQWKVISRAPVDVCRLRDAWAQVVDRHAVLRTLFLHVCKENYLDQVVLRSHSPMVLVYNEGEEPVNPVSTGCSQPMHHLRVKRSSAGGITVRLHINHALVDGASLFIIRRDLAMAYEGRLASSRASSPYRDYIAYLQNCHSQIQSNEYWQSYMEGTAPCLFPTLKNAGAQDSQQPFEAFTLQLGATADLNQFCENHRLALTSVLHVVWAMVVQRYTAMDEVCFGYMTSGRHVPVAGVQDIVGPLFNMLVARVGLPHDATLLSVMQKYHDNFLISLDHQHQSLAETLHSIGSASGELFNTLVSIFNDQREGEPAHKSSAVTLVGDDIHSRSEYAITLNVLMLADQVHIQLSYHTSWLSDNYARMIAETFRHVLATVLGQPQLRLNEIEMLDEEHRSGLYGRNHAAVPSFDSCIHYTIHQRCLESPESPAICAWDGDFSYRRLDQLSSSLAEELIGHGVGVEMTIPVLLEKTCWTPVAMLAVLKSGASFVLMDASHPLGRLQTICEAINPPVILASPQTRSKAVGLTSHVIEVTNRLLEQEQAEQQQTWPRVVTKGSNAAYVVFTSGSTGKPKGAIVDHSCLATAAGHLPSRMYINSASRVLQFSSHAWDIPVTDVLLTLRVGGCVCIPSDEERIGNLAQVANRMMVNWALLTPTVARLVKPEDFTHLQTLVLAGEAVSSTDLTTWHDKVRLIQGYGPAECSLVSTVSEPLTPSDNPRNIGQPNGCVAWVVHRDNHHLLAPSGAIEELVLEGPIVSRGYINDPERSAAVFVDPPTWLTRLRGGHSPTRLYKTGDLVSAGLDGCLSFVGRKDDQVKIRGQRVELGEVEALASQAFPGSHVVVETVKDLSSTILVAFILQKETAHAQPSSISSLLHPPSPLFRELISAASCSLRETMPSFMIPTVFLPLAHLPKAPTGKTDRKFLRGHVASLSRMELEAYSIVDATGRAPSTPLETRLQELVGRVLHRSPESIPLDEDLFTFGLDSLTAMTLATLVREDGLAISVPTIFQRPRLSELAVVLNQEQQIKQGQFLAPPPNALMASMDELCAQWQLDRSQVVNIAPTTYYQRGSLASHHTNFIALHFSQPLDPIPFRNAVVGLVQKHAILRTAFVPFRETFVQLILRDFDLPVQEIRTDEDDPSVVAESFCREADRVPVSFGTPITQLYMILGRAGDRLSAVLRLQRAQYDGVAVSCMIADLRSAFDEAPSSALPTLEYADYVISRRAHSSPPVFQVWRELLQGSSMTYLVPPTEYIRSTDRSRTELLVTSSCDIPMPDTKGGITMATVIKTAWALCLARQTQSKDVVFAQLVRNRHLAIAGIDRTVGPCINYVPVRASLNLDWTAKEFLHWVQRQHIRTMTCDMADWDDLVIESTSWPRDTELGSAVHYLSAPVASDYTFAGDVPCQFQMYDFKMVHTYPMVTCLPFPSVGDSSLTVLKIILTSAVFGQGVADRLLSLFRDMVHRLTTYPESLVSELLIIR</sequence>
<gene>
    <name evidence="7" type="primary">lpsA</name>
</gene>
<accession>Q96V34</accession>
<feature type="chain" id="PRO_0000439107" description="D-lysergyl-peptide-synthetase subunit 1">
    <location>
        <begin position="1"/>
        <end position="3589"/>
    </location>
</feature>
<feature type="domain" description="Carrier 1" evidence="4">
    <location>
        <begin position="883"/>
        <end position="952"/>
    </location>
</feature>
<feature type="domain" description="Carrier 2" evidence="4">
    <location>
        <begin position="1974"/>
        <end position="2042"/>
    </location>
</feature>
<feature type="domain" description="Carrier 3" evidence="4">
    <location>
        <begin position="3064"/>
        <end position="3132"/>
    </location>
</feature>
<feature type="region of interest" description="Adenylation (A) domain 1" evidence="3">
    <location>
        <begin position="344"/>
        <end position="742"/>
    </location>
</feature>
<feature type="region of interest" description="Condensation (C) domain 1" evidence="3">
    <location>
        <begin position="995"/>
        <end position="1380"/>
    </location>
</feature>
<feature type="region of interest" description="Adenylation (A) domain 2" evidence="3">
    <location>
        <begin position="1424"/>
        <end position="1826"/>
    </location>
</feature>
<feature type="region of interest" description="Condensation (C) domain 2" evidence="3">
    <location>
        <begin position="2087"/>
        <end position="2509"/>
    </location>
</feature>
<feature type="region of interest" description="Adenylation (A) domain 3" evidence="3">
    <location>
        <begin position="2534"/>
        <end position="2929"/>
    </location>
</feature>
<feature type="region of interest" description="Cyclization (Cyc) domain" evidence="3">
    <location>
        <begin position="3187"/>
        <end position="3585"/>
    </location>
</feature>
<feature type="modified residue" description="O-(pantetheine 4'-phosphoryl)serine" evidence="4">
    <location>
        <position position="915"/>
    </location>
</feature>
<feature type="modified residue" description="O-(pantetheine 4'-phosphoryl)serine" evidence="4">
    <location>
        <position position="2006"/>
    </location>
</feature>
<feature type="modified residue" description="O-(pantetheine 4'-phosphoryl)serine" evidence="4">
    <location>
        <position position="3096"/>
    </location>
</feature>
<organism>
    <name type="scientific">Epichloe festucae var. lolii</name>
    <name type="common">Neotyphodium lolii</name>
    <name type="synonym">Acremonium lolii</name>
    <dbReference type="NCBI Taxonomy" id="73839"/>
    <lineage>
        <taxon>Eukaryota</taxon>
        <taxon>Fungi</taxon>
        <taxon>Dikarya</taxon>
        <taxon>Ascomycota</taxon>
        <taxon>Pezizomycotina</taxon>
        <taxon>Sordariomycetes</taxon>
        <taxon>Hypocreomycetidae</taxon>
        <taxon>Hypocreales</taxon>
        <taxon>Clavicipitaceae</taxon>
        <taxon>Epichloe</taxon>
    </lineage>
</organism>
<name>LPSA1_EPIFI</name>
<protein>
    <recommendedName>
        <fullName evidence="7">D-lysergyl-peptide-synthetase subunit 1</fullName>
        <shortName evidence="7">LPSA</shortName>
        <ecNumber evidence="9">2.3.1.-</ecNumber>
    </recommendedName>
    <alternativeName>
        <fullName evidence="9">Ergot alkaloid synthesis protein lpsA</fullName>
    </alternativeName>
    <alternativeName>
        <fullName evidence="7">Nonribosomal peptide synthetase lpsA</fullName>
    </alternativeName>
</protein>
<proteinExistence type="inferred from homology"/>
<dbReference type="EC" id="2.3.1.-" evidence="9"/>
<dbReference type="EMBL" id="AF368420">
    <property type="protein sequence ID" value="AAL26315.2"/>
    <property type="molecule type" value="Genomic_DNA"/>
</dbReference>
<dbReference type="SMR" id="Q96V34"/>
<dbReference type="UniPathway" id="UPA00327"/>
<dbReference type="GO" id="GO:0005737">
    <property type="term" value="C:cytoplasm"/>
    <property type="evidence" value="ECO:0007669"/>
    <property type="project" value="TreeGrafter"/>
</dbReference>
<dbReference type="GO" id="GO:0016874">
    <property type="term" value="F:ligase activity"/>
    <property type="evidence" value="ECO:0007669"/>
    <property type="project" value="UniProtKB-KW"/>
</dbReference>
<dbReference type="GO" id="GO:0031177">
    <property type="term" value="F:phosphopantetheine binding"/>
    <property type="evidence" value="ECO:0007669"/>
    <property type="project" value="InterPro"/>
</dbReference>
<dbReference type="GO" id="GO:0016740">
    <property type="term" value="F:transferase activity"/>
    <property type="evidence" value="ECO:0007669"/>
    <property type="project" value="UniProtKB-KW"/>
</dbReference>
<dbReference type="GO" id="GO:0043041">
    <property type="term" value="P:amino acid activation for nonribosomal peptide biosynthetic process"/>
    <property type="evidence" value="ECO:0007669"/>
    <property type="project" value="TreeGrafter"/>
</dbReference>
<dbReference type="GO" id="GO:0035835">
    <property type="term" value="P:indole alkaloid biosynthetic process"/>
    <property type="evidence" value="ECO:0007669"/>
    <property type="project" value="UniProtKB-UniPathway"/>
</dbReference>
<dbReference type="CDD" id="cd05918">
    <property type="entry name" value="A_NRPS_SidN3_like"/>
    <property type="match status" value="3"/>
</dbReference>
<dbReference type="CDD" id="cd19542">
    <property type="entry name" value="CT_NRPS-like"/>
    <property type="match status" value="2"/>
</dbReference>
<dbReference type="CDD" id="cd19545">
    <property type="entry name" value="FUM14_C_NRPS-like"/>
    <property type="match status" value="1"/>
</dbReference>
<dbReference type="FunFam" id="3.30.300.30:FF:000015">
    <property type="entry name" value="Nonribosomal peptide synthase SidD"/>
    <property type="match status" value="3"/>
</dbReference>
<dbReference type="FunFam" id="3.30.559.30:FF:000003">
    <property type="entry name" value="Nonribosomal peptide synthase SidD"/>
    <property type="match status" value="1"/>
</dbReference>
<dbReference type="FunFam" id="1.10.1200.10:FF:000005">
    <property type="entry name" value="Nonribosomal peptide synthetase 1"/>
    <property type="match status" value="1"/>
</dbReference>
<dbReference type="FunFam" id="3.40.50.12780:FF:000014">
    <property type="entry name" value="Nonribosomal peptide synthetase 1"/>
    <property type="match status" value="1"/>
</dbReference>
<dbReference type="Gene3D" id="3.30.300.30">
    <property type="match status" value="3"/>
</dbReference>
<dbReference type="Gene3D" id="1.10.1200.10">
    <property type="entry name" value="ACP-like"/>
    <property type="match status" value="3"/>
</dbReference>
<dbReference type="Gene3D" id="3.30.559.10">
    <property type="entry name" value="Chloramphenicol acetyltransferase-like domain"/>
    <property type="match status" value="3"/>
</dbReference>
<dbReference type="Gene3D" id="3.40.50.12780">
    <property type="entry name" value="N-terminal domain of ligase-like"/>
    <property type="match status" value="3"/>
</dbReference>
<dbReference type="Gene3D" id="3.30.559.30">
    <property type="entry name" value="Nonribosomal peptide synthetase, condensation domain"/>
    <property type="match status" value="4"/>
</dbReference>
<dbReference type="InterPro" id="IPR010071">
    <property type="entry name" value="AA_adenyl_dom"/>
</dbReference>
<dbReference type="InterPro" id="IPR036736">
    <property type="entry name" value="ACP-like_sf"/>
</dbReference>
<dbReference type="InterPro" id="IPR045851">
    <property type="entry name" value="AMP-bd_C_sf"/>
</dbReference>
<dbReference type="InterPro" id="IPR020845">
    <property type="entry name" value="AMP-binding_CS"/>
</dbReference>
<dbReference type="InterPro" id="IPR000873">
    <property type="entry name" value="AMP-dep_synth/lig_dom"/>
</dbReference>
<dbReference type="InterPro" id="IPR042099">
    <property type="entry name" value="ANL_N_sf"/>
</dbReference>
<dbReference type="InterPro" id="IPR023213">
    <property type="entry name" value="CAT-like_dom_sf"/>
</dbReference>
<dbReference type="InterPro" id="IPR001242">
    <property type="entry name" value="Condensatn"/>
</dbReference>
<dbReference type="InterPro" id="IPR020806">
    <property type="entry name" value="PKS_PP-bd"/>
</dbReference>
<dbReference type="InterPro" id="IPR009081">
    <property type="entry name" value="PP-bd_ACP"/>
</dbReference>
<dbReference type="InterPro" id="IPR006162">
    <property type="entry name" value="Ppantetheine_attach_site"/>
</dbReference>
<dbReference type="NCBIfam" id="TIGR01733">
    <property type="entry name" value="AA-adenyl-dom"/>
    <property type="match status" value="2"/>
</dbReference>
<dbReference type="NCBIfam" id="NF003417">
    <property type="entry name" value="PRK04813.1"/>
    <property type="match status" value="3"/>
</dbReference>
<dbReference type="PANTHER" id="PTHR45527:SF16">
    <property type="entry name" value="NONRIBOSOMAL PEPTIDE SYNTHASE ATNA-RELATED"/>
    <property type="match status" value="1"/>
</dbReference>
<dbReference type="PANTHER" id="PTHR45527">
    <property type="entry name" value="NONRIBOSOMAL PEPTIDE SYNTHETASE"/>
    <property type="match status" value="1"/>
</dbReference>
<dbReference type="Pfam" id="PF00501">
    <property type="entry name" value="AMP-binding"/>
    <property type="match status" value="3"/>
</dbReference>
<dbReference type="Pfam" id="PF00668">
    <property type="entry name" value="Condensation"/>
    <property type="match status" value="4"/>
</dbReference>
<dbReference type="Pfam" id="PF00550">
    <property type="entry name" value="PP-binding"/>
    <property type="match status" value="3"/>
</dbReference>
<dbReference type="SMART" id="SM00823">
    <property type="entry name" value="PKS_PP"/>
    <property type="match status" value="3"/>
</dbReference>
<dbReference type="SUPFAM" id="SSF56801">
    <property type="entry name" value="Acetyl-CoA synthetase-like"/>
    <property type="match status" value="3"/>
</dbReference>
<dbReference type="SUPFAM" id="SSF47336">
    <property type="entry name" value="ACP-like"/>
    <property type="match status" value="3"/>
</dbReference>
<dbReference type="SUPFAM" id="SSF52777">
    <property type="entry name" value="CoA-dependent acyltransferases"/>
    <property type="match status" value="7"/>
</dbReference>
<dbReference type="PROSITE" id="PS00455">
    <property type="entry name" value="AMP_BINDING"/>
    <property type="match status" value="1"/>
</dbReference>
<dbReference type="PROSITE" id="PS50075">
    <property type="entry name" value="CARRIER"/>
    <property type="match status" value="3"/>
</dbReference>
<dbReference type="PROSITE" id="PS00012">
    <property type="entry name" value="PHOSPHOPANTETHEINE"/>
    <property type="match status" value="1"/>
</dbReference>
<reference key="1">
    <citation type="journal article" date="2001" name="Proc. Natl. Acad. Sci. U.S.A.">
        <title>Elimination of ergovaline from a grass-Neotyphodium endophyte symbiosis by genetic modification of the endophyte.</title>
        <authorList>
            <person name="Panaccione D.G."/>
            <person name="Johnson R.D."/>
            <person name="Wang J."/>
            <person name="Young C.A."/>
            <person name="Damrongkool P."/>
            <person name="Scott B."/>
            <person name="Schardl C.L."/>
        </authorList>
    </citation>
    <scope>NUCLEOTIDE SEQUENCE [GENOMIC DNA]</scope>
    <scope>FUNCTION</scope>
    <scope>DISRUPTION PHENOTYPE</scope>
</reference>
<reference key="2">
    <citation type="journal article" date="2007" name="Appl. Environ. Microbiol.">
        <title>A complex ergovaline gene cluster in epichloe endophytes of grasses.</title>
        <authorList>
            <person name="Fleetwood D.J."/>
            <person name="Scott B."/>
            <person name="Lane G.A."/>
            <person name="Tanaka A."/>
            <person name="Johnson R.D."/>
        </authorList>
    </citation>
    <scope>FUNCTION</scope>
    <source>
        <strain>Lp19</strain>
    </source>
</reference>
<comment type="function">
    <text evidence="2 5 6">D-lysergyl-peptide-synthetase subunit 1; part of the gene cluster that mediates the biosynthesis of fungal ergot alkaloid ergovaline, the predominant ergopeptine product in E.festucae var. lolii (PubMed:17308187). DmaW catalyzes the first step of ergot alkaloid biosynthesis by condensing dimethylallyl diphosphate (DMAP) and tryptophan to form 4-dimethylallyl-L-tryptophan (By similarity). The second step is catalyzed by the methyltransferase easF that methylates 4-dimethylallyl-L-tryptophan in the presence of S-adenosyl-L-methionine, resulting in the formation of 4-dimethylallyl-L-abrine (By similarity). The catalase easC and the FAD-dependent oxidoreductase easE then transform 4-dimethylallyl-L-abrine to chanoclavine-I which is further oxidized by easD in the presence of NAD(+), resulting in the formation of chanoclavine-I aldehyde (By similarity). Agroclavine dehydrogenase easG then mediates the conversion of chanoclavine-I aldehyde to agroclavine via a non-enzymatic adduct reaction: the substrate is an iminium intermediate that is formed spontaneously from chanoclavine-I aldehyde in the presence of glutathione (By similarity). The presence of easA is not required to complete this reaction (By similarity). Further conversion of agroclavine to paspalic acid is a two-step process involving oxidation of agroclavine to elymoclavine and of elymoclavine to paspalic acid, the second step being performed by the elymoclavine oxidase cloA (By similarity). Paspalic acid is then further converted to D-lysergic acid (By similarity). Ergovaline is assembled from D-lysergic acid and three different amino acids by the D-lysergyl-peptide-synthetase composed of a monomudular (lpsB) and a trimodular (lpsA) nonribosomal peptide synthetase subunit (PubMed:11592979, PubMed:17308187).</text>
</comment>
<comment type="pathway">
    <text evidence="9">Alkaloid biosynthesis; ergot alkaloid biosynthesis.</text>
</comment>
<comment type="domain">
    <text evidence="1">NRP synthetases are composed of discrete domains (adenylation (A), thiolation (T) or peptidyl carrier protein (PCP) and condensation (C) domains) which when grouped together are referred to as a single module (By similarity). Each module is responsible for the recognition (via the A domain) and incorporation of a single amino acid into the growing peptide product (By similarity). Thus, an NRP synthetase is generally composed of one or more modules and can terminate in a thioesterase domain (TE) or reductase domain (R) that releases the newly synthesized peptide from the enzyme (By similarity). LpsA1 has a domain arrangement (A-T-C-A-T-C-A-T-Cyc) with 3 A and 3 peptidyl carrier (PCP/T) domains, 2 C-domains, and a terminal domain called the Cyc domain (By similarity). The Cyc domain has limited similarity to both C and Cy domains of NRPS but is most different in the so-called C3 and Cy3 motif of the latter domains, suggesting a special mechanism in acyl diketopiperazine formation, which is the final step of D-lysergyl peptide lactam synthesis (By similarity). LpsA misses an N-terminal C domain in the first module, leading to the conclusion that this C domain is located on the other subunit (lpsB) containing the D-lysergic acid module (By similarity).</text>
</comment>
<comment type="disruption phenotype">
    <text evidence="5">Abolishes the production of ergovaline (PubMed:11592979).</text>
</comment>
<comment type="similarity">
    <text evidence="8">Belongs to the NRP synthetase family.</text>
</comment>
<keyword id="KW-0436">Ligase</keyword>
<keyword id="KW-0596">Phosphopantetheine</keyword>
<keyword id="KW-0597">Phosphoprotein</keyword>
<keyword id="KW-0677">Repeat</keyword>
<keyword id="KW-0808">Transferase</keyword>